<sequence length="202" mass="22465">MSDKAAAPKKQGRNNGAVVLMCLSFVFGMGAMSYAAVPLYRIFCQVTGYNGTTQRVEQMSSVVLDRKMRVTFDANVAPGLQWDFKPVEREVNPRIGETIQVKFTAENRSNETQRGQAVFNVTPGEAGVYFNKVQCFCFTETDLKPGEKLEMPVVFYIDPEIVNAVESKDIHTVTLSYTFYPKEGPKPLASNEGGAEKVEKKL</sequence>
<protein>
    <recommendedName>
        <fullName evidence="1">Cytochrome c oxidase assembly protein CtaG</fullName>
    </recommendedName>
</protein>
<keyword id="KW-0997">Cell inner membrane</keyword>
<keyword id="KW-1003">Cell membrane</keyword>
<keyword id="KW-0186">Copper</keyword>
<keyword id="KW-0472">Membrane</keyword>
<keyword id="KW-0735">Signal-anchor</keyword>
<keyword id="KW-0812">Transmembrane</keyword>
<keyword id="KW-1133">Transmembrane helix</keyword>
<evidence type="ECO:0000255" key="1">
    <source>
        <dbReference type="HAMAP-Rule" id="MF_00155"/>
    </source>
</evidence>
<evidence type="ECO:0000256" key="2">
    <source>
        <dbReference type="SAM" id="MobiDB-lite"/>
    </source>
</evidence>
<reference key="1">
    <citation type="journal article" date="2010" name="Appl. Environ. Microbiol.">
        <title>Conserved symbiotic plasmid DNA sequences in the multireplicon pangenomic structure of Rhizobium etli.</title>
        <authorList>
            <person name="Gonzalez V."/>
            <person name="Acosta J.L."/>
            <person name="Santamaria R.I."/>
            <person name="Bustos P."/>
            <person name="Fernandez J.L."/>
            <person name="Hernandez Gonzalez I.L."/>
            <person name="Diaz R."/>
            <person name="Flores M."/>
            <person name="Palacios R."/>
            <person name="Mora J."/>
            <person name="Davila G."/>
        </authorList>
    </citation>
    <scope>NUCLEOTIDE SEQUENCE [LARGE SCALE GENOMIC DNA]</scope>
    <source>
        <strain>CIAT 652</strain>
    </source>
</reference>
<proteinExistence type="inferred from homology"/>
<comment type="function">
    <text evidence="1">Exerts its effect at some terminal stage of cytochrome c oxidase synthesis, probably by being involved in the insertion of the copper B into subunit I.</text>
</comment>
<comment type="subcellular location">
    <subcellularLocation>
        <location evidence="1">Cell inner membrane</location>
        <topology evidence="1">Single-pass type II membrane protein</topology>
        <orientation evidence="1">Periplasmic side</orientation>
    </subcellularLocation>
</comment>
<comment type="similarity">
    <text evidence="1">Belongs to the COX11/CtaG family.</text>
</comment>
<gene>
    <name evidence="1" type="primary">ctaG</name>
    <name type="ordered locus">RHECIAT_CH0001051</name>
</gene>
<feature type="chain" id="PRO_1000096929" description="Cytochrome c oxidase assembly protein CtaG">
    <location>
        <begin position="1"/>
        <end position="202"/>
    </location>
</feature>
<feature type="topological domain" description="Cytoplasmic" evidence="1">
    <location>
        <begin position="1"/>
        <end position="13"/>
    </location>
</feature>
<feature type="transmembrane region" description="Helical; Signal-anchor for type II membrane protein" evidence="1">
    <location>
        <begin position="14"/>
        <end position="36"/>
    </location>
</feature>
<feature type="topological domain" description="Periplasmic" evidence="1">
    <location>
        <begin position="37"/>
        <end position="202"/>
    </location>
</feature>
<feature type="region of interest" description="Disordered" evidence="2">
    <location>
        <begin position="183"/>
        <end position="202"/>
    </location>
</feature>
<accession>B3PSB4</accession>
<organism>
    <name type="scientific">Rhizobium etli (strain CIAT 652)</name>
    <dbReference type="NCBI Taxonomy" id="491916"/>
    <lineage>
        <taxon>Bacteria</taxon>
        <taxon>Pseudomonadati</taxon>
        <taxon>Pseudomonadota</taxon>
        <taxon>Alphaproteobacteria</taxon>
        <taxon>Hyphomicrobiales</taxon>
        <taxon>Rhizobiaceae</taxon>
        <taxon>Rhizobium/Agrobacterium group</taxon>
        <taxon>Rhizobium</taxon>
    </lineage>
</organism>
<name>COXZ_RHIE6</name>
<dbReference type="EMBL" id="CP001074">
    <property type="protein sequence ID" value="ACE90036.1"/>
    <property type="molecule type" value="Genomic_DNA"/>
</dbReference>
<dbReference type="SMR" id="B3PSB4"/>
<dbReference type="KEGG" id="rec:RHECIAT_CH0001051"/>
<dbReference type="eggNOG" id="COG3175">
    <property type="taxonomic scope" value="Bacteria"/>
</dbReference>
<dbReference type="HOGENOM" id="CLU_045000_5_0_5"/>
<dbReference type="Proteomes" id="UP000008817">
    <property type="component" value="Chromosome"/>
</dbReference>
<dbReference type="GO" id="GO:0005886">
    <property type="term" value="C:plasma membrane"/>
    <property type="evidence" value="ECO:0007669"/>
    <property type="project" value="UniProtKB-SubCell"/>
</dbReference>
<dbReference type="GO" id="GO:0005507">
    <property type="term" value="F:copper ion binding"/>
    <property type="evidence" value="ECO:0007669"/>
    <property type="project" value="InterPro"/>
</dbReference>
<dbReference type="GO" id="GO:0008535">
    <property type="term" value="P:respiratory chain complex IV assembly"/>
    <property type="evidence" value="ECO:0007669"/>
    <property type="project" value="UniProtKB-UniRule"/>
</dbReference>
<dbReference type="FunFam" id="2.60.370.10:FF:000001">
    <property type="entry name" value="COX11 cytochrome c oxidase assembly homolog"/>
    <property type="match status" value="1"/>
</dbReference>
<dbReference type="Gene3D" id="2.60.370.10">
    <property type="entry name" value="Ctag/Cox11"/>
    <property type="match status" value="1"/>
</dbReference>
<dbReference type="HAMAP" id="MF_00155">
    <property type="entry name" value="CtaG"/>
    <property type="match status" value="1"/>
</dbReference>
<dbReference type="InterPro" id="IPR023471">
    <property type="entry name" value="CtaG/Cox11_dom_sf"/>
</dbReference>
<dbReference type="InterPro" id="IPR007533">
    <property type="entry name" value="Cyt_c_oxidase_assmbl_CtaG"/>
</dbReference>
<dbReference type="NCBIfam" id="NF003465">
    <property type="entry name" value="PRK05089.1"/>
    <property type="match status" value="1"/>
</dbReference>
<dbReference type="PANTHER" id="PTHR21320:SF3">
    <property type="entry name" value="CYTOCHROME C OXIDASE ASSEMBLY PROTEIN COX11, MITOCHONDRIAL-RELATED"/>
    <property type="match status" value="1"/>
</dbReference>
<dbReference type="PANTHER" id="PTHR21320">
    <property type="entry name" value="CYTOCHROME C OXIDASE ASSEMBLY PROTEIN COX11-RELATED"/>
    <property type="match status" value="1"/>
</dbReference>
<dbReference type="Pfam" id="PF04442">
    <property type="entry name" value="CtaG_Cox11"/>
    <property type="match status" value="1"/>
</dbReference>
<dbReference type="PIRSF" id="PIRSF005413">
    <property type="entry name" value="COX11"/>
    <property type="match status" value="1"/>
</dbReference>
<dbReference type="SUPFAM" id="SSF110111">
    <property type="entry name" value="Ctag/Cox11"/>
    <property type="match status" value="1"/>
</dbReference>